<feature type="signal peptide" evidence="2">
    <location>
        <begin position="1"/>
        <end position="32"/>
    </location>
</feature>
<feature type="chain" id="PRO_0000281485" description="DnaJ homolog subfamily C member 10">
    <location>
        <begin position="33"/>
        <end position="793"/>
    </location>
</feature>
<feature type="domain" description="J" evidence="3">
    <location>
        <begin position="35"/>
        <end position="100"/>
    </location>
</feature>
<feature type="domain" description="Thioredoxin 1" evidence="4">
    <location>
        <begin position="130"/>
        <end position="232"/>
    </location>
</feature>
<feature type="domain" description="Thioredoxin 2" evidence="4">
    <location>
        <begin position="454"/>
        <end position="553"/>
    </location>
</feature>
<feature type="domain" description="Thioredoxin 3" evidence="4">
    <location>
        <begin position="557"/>
        <end position="662"/>
    </location>
</feature>
<feature type="domain" description="Thioredoxin 4" evidence="4">
    <location>
        <begin position="671"/>
        <end position="778"/>
    </location>
</feature>
<feature type="region of interest" description="Trxb 1">
    <location>
        <begin position="235"/>
        <end position="350"/>
    </location>
</feature>
<feature type="region of interest" description="Trxb 2">
    <location>
        <begin position="348"/>
        <end position="463"/>
    </location>
</feature>
<feature type="short sequence motif" description="Prevents secretion from ER" evidence="5">
    <location>
        <begin position="790"/>
        <end position="793"/>
    </location>
</feature>
<feature type="glycosylation site" description="N-linked (GlcNAc...) asparagine" evidence="2">
    <location>
        <position position="530"/>
    </location>
</feature>
<feature type="disulfide bond" description="Redox-active" evidence="4">
    <location>
        <begin position="158"/>
        <end position="161"/>
    </location>
</feature>
<feature type="disulfide bond" description="Redox-active" evidence="4">
    <location>
        <begin position="480"/>
        <end position="483"/>
    </location>
</feature>
<feature type="disulfide bond" description="Redox-active" evidence="4">
    <location>
        <begin position="588"/>
        <end position="591"/>
    </location>
</feature>
<feature type="disulfide bond" description="Redox-active" evidence="4">
    <location>
        <begin position="700"/>
        <end position="703"/>
    </location>
</feature>
<name>DJC10_PONAB</name>
<comment type="function">
    <text evidence="1">Endoplasmic reticulum disulfide reductase involved both in the correct folding of proteins and degradation of misfolded proteins. Required for efficient folding of proteins in the endoplasmic reticulum by catalyzing the removal of non-native disulfide bonds formed during the folding of proteins, such as LDLR. Also involved in endoplasmic reticulum-associated degradation (ERAD) by reducing incorrect disulfide bonds in misfolded glycoproteins recognized by EDEM1. Interaction with HSPA5 is required its activity, not for the disulfide reductase activity, but to facilitate the release of DNAJC10 from its substrate. Promotes apoptotic signaling pathway in response to endoplasmic reticulum stress (By similarity).</text>
</comment>
<comment type="subunit">
    <text evidence="1">Interacts with HSPA5 (via its J domain). Interacts with EDEM1 (By similarity).</text>
</comment>
<comment type="subcellular location">
    <subcellularLocation>
        <location evidence="5">Endoplasmic reticulum lumen</location>
    </subcellularLocation>
</comment>
<comment type="domain">
    <text evidence="1">Thioredoxin domains 3 and 4 are the primary reductase domains.</text>
</comment>
<comment type="domain">
    <text evidence="1">The thioredoxin-like regions Trxb 1 and 2 lack a redox-active CXXC motif.</text>
</comment>
<organism>
    <name type="scientific">Pongo abelii</name>
    <name type="common">Sumatran orangutan</name>
    <name type="synonym">Pongo pygmaeus abelii</name>
    <dbReference type="NCBI Taxonomy" id="9601"/>
    <lineage>
        <taxon>Eukaryota</taxon>
        <taxon>Metazoa</taxon>
        <taxon>Chordata</taxon>
        <taxon>Craniata</taxon>
        <taxon>Vertebrata</taxon>
        <taxon>Euteleostomi</taxon>
        <taxon>Mammalia</taxon>
        <taxon>Eutheria</taxon>
        <taxon>Euarchontoglires</taxon>
        <taxon>Primates</taxon>
        <taxon>Haplorrhini</taxon>
        <taxon>Catarrhini</taxon>
        <taxon>Hominidae</taxon>
        <taxon>Pongo</taxon>
    </lineage>
</organism>
<protein>
    <recommendedName>
        <fullName>DnaJ homolog subfamily C member 10</fullName>
        <ecNumber>1.8.4.-</ecNumber>
    </recommendedName>
</protein>
<accession>Q5R5L3</accession>
<sequence>MGVWLSKDDYIRDLKRIILCFLIVYMAILVGTEQDFYSLLGVSKTASSREIRQAFKKLALKLHPDKNPNNPNAHGNFLKINRAYEVLKDEDLRKKYDKYGEKGLEDNQGGQYESWNYYRYDFGIYDDDPEIITLERREFDAAVNSGELWFVNFYSPGCSHCHDLAPTWRDFAKEVDGLLRIGAVNCGDDRMLCRMKGVNSYPSLFIFRSGMAPVKYHGDRSKESLVSFAMQHVRSTVTELWTGNFVNSIQTAFAAGIGWLITFCSKGGDCLTSQTRLRLSGMLDGLVNVGWMDCATQDNLCKSLDITTSTTAYFPPGATLNNKEKNSILFLNSLDAKEIYLEVIHNLPDFELLSAHTLEDRLAHHRWLLFFHFGKNENSNDPELKKLKTLLKNDHIQVGRFDCSSAPDICSNLYVFQPSLAVFKGQGTKEYEIHHGKKILYDILAFAKESVNSHVTTLGPQNFPANDKEPWLVDFFAPWCPPCRALLPELRRASNLLYGQLKFGTLDCTVHEGLCNMYNIQAYPTTVVFNQSNIHEYEGHHSAEQILEFIEDLMNPSVVSLTPTTFNELVTQRKHNEVWMVDFYSPWCHPCQVLMPEWKRMARTLTGLINVGSIDCQQYHSFCAQENVQRYPEIRFFPPKSNKAYQYHSYNGWNRDAYSLRIWGLGFLPQVSTGLTPQTFSEKVLQGKNHWVIDFYAPWCGPCQNFAPEFELLARMIKGKVKAGKVDCQAYAQTCQKAGIRAYPTVKFYFYESAKRTFQEEQINIRDAKAIAALINEKLETLQNQGKRNKDEL</sequence>
<keyword id="KW-1015">Disulfide bond</keyword>
<keyword id="KW-0256">Endoplasmic reticulum</keyword>
<keyword id="KW-0325">Glycoprotein</keyword>
<keyword id="KW-0560">Oxidoreductase</keyword>
<keyword id="KW-0676">Redox-active center</keyword>
<keyword id="KW-1185">Reference proteome</keyword>
<keyword id="KW-0677">Repeat</keyword>
<keyword id="KW-0732">Signal</keyword>
<proteinExistence type="evidence at transcript level"/>
<dbReference type="EC" id="1.8.4.-"/>
<dbReference type="EMBL" id="CR860844">
    <property type="protein sequence ID" value="CAH92953.1"/>
    <property type="molecule type" value="mRNA"/>
</dbReference>
<dbReference type="RefSeq" id="NP_001126740.1">
    <property type="nucleotide sequence ID" value="NM_001133268.1"/>
</dbReference>
<dbReference type="SMR" id="Q5R5L3"/>
<dbReference type="FunCoup" id="Q5R5L3">
    <property type="interactions" value="2641"/>
</dbReference>
<dbReference type="STRING" id="9601.ENSPPYP00000014516"/>
<dbReference type="GlyCosmos" id="Q5R5L3">
    <property type="glycosylation" value="1 site, No reported glycans"/>
</dbReference>
<dbReference type="GeneID" id="100173742"/>
<dbReference type="KEGG" id="pon:100173742"/>
<dbReference type="CTD" id="54431"/>
<dbReference type="eggNOG" id="KOG0191">
    <property type="taxonomic scope" value="Eukaryota"/>
</dbReference>
<dbReference type="eggNOG" id="KOG0713">
    <property type="taxonomic scope" value="Eukaryota"/>
</dbReference>
<dbReference type="InParanoid" id="Q5R5L3"/>
<dbReference type="OrthoDB" id="5810603at2759"/>
<dbReference type="Proteomes" id="UP000001595">
    <property type="component" value="Unplaced"/>
</dbReference>
<dbReference type="GO" id="GO:0005788">
    <property type="term" value="C:endoplasmic reticulum lumen"/>
    <property type="evidence" value="ECO:0000250"/>
    <property type="project" value="UniProtKB"/>
</dbReference>
<dbReference type="GO" id="GO:0051787">
    <property type="term" value="F:misfolded protein binding"/>
    <property type="evidence" value="ECO:0007669"/>
    <property type="project" value="TreeGrafter"/>
</dbReference>
<dbReference type="GO" id="GO:0016671">
    <property type="term" value="F:oxidoreductase activity, acting on a sulfur group of donors, disulfide as acceptor"/>
    <property type="evidence" value="ECO:0000250"/>
    <property type="project" value="UniProtKB"/>
</dbReference>
<dbReference type="GO" id="GO:0015035">
    <property type="term" value="F:protein-disulfide reductase activity"/>
    <property type="evidence" value="ECO:0000250"/>
    <property type="project" value="UniProtKB"/>
</dbReference>
<dbReference type="GO" id="GO:0036503">
    <property type="term" value="P:ERAD pathway"/>
    <property type="evidence" value="ECO:0000250"/>
    <property type="project" value="UniProtKB"/>
</dbReference>
<dbReference type="GO" id="GO:0036498">
    <property type="term" value="P:IRE1-mediated unfolded protein response"/>
    <property type="evidence" value="ECO:0007669"/>
    <property type="project" value="TreeGrafter"/>
</dbReference>
<dbReference type="GO" id="GO:0034975">
    <property type="term" value="P:protein folding in endoplasmic reticulum"/>
    <property type="evidence" value="ECO:0000250"/>
    <property type="project" value="UniProtKB"/>
</dbReference>
<dbReference type="CDD" id="cd06257">
    <property type="entry name" value="DnaJ"/>
    <property type="match status" value="1"/>
</dbReference>
<dbReference type="CDD" id="cd03004">
    <property type="entry name" value="PDI_a_ERdj5_C"/>
    <property type="match status" value="3"/>
</dbReference>
<dbReference type="CDD" id="cd03003">
    <property type="entry name" value="PDI_a_ERdj5_N"/>
    <property type="match status" value="1"/>
</dbReference>
<dbReference type="FunFam" id="1.10.287.110:FF:000029">
    <property type="entry name" value="DnaJ homolog subfamily C member 10"/>
    <property type="match status" value="1"/>
</dbReference>
<dbReference type="FunFam" id="3.40.30.10:FF:000087">
    <property type="entry name" value="DnaJ homolog subfamily C member 10"/>
    <property type="match status" value="1"/>
</dbReference>
<dbReference type="FunFam" id="3.40.30.10:FF:000106">
    <property type="entry name" value="DnaJ homolog subfamily C member 10"/>
    <property type="match status" value="1"/>
</dbReference>
<dbReference type="FunFam" id="3.40.30.10:FF:000125">
    <property type="entry name" value="DnaJ homolog subfamily C member 10"/>
    <property type="match status" value="1"/>
</dbReference>
<dbReference type="FunFam" id="3.40.30.10:FF:000135">
    <property type="entry name" value="DnaJ homolog subfamily C member 10"/>
    <property type="match status" value="1"/>
</dbReference>
<dbReference type="FunFam" id="3.40.30.10:FF:000137">
    <property type="entry name" value="DnaJ homolog subfamily C member 10"/>
    <property type="match status" value="1"/>
</dbReference>
<dbReference type="FunFam" id="3.40.30.10:FF:000169">
    <property type="entry name" value="DnaJ homolog subfamily C member 10"/>
    <property type="match status" value="1"/>
</dbReference>
<dbReference type="Gene3D" id="1.10.287.110">
    <property type="entry name" value="DnaJ domain"/>
    <property type="match status" value="1"/>
</dbReference>
<dbReference type="Gene3D" id="3.40.30.10">
    <property type="entry name" value="Glutaredoxin"/>
    <property type="match status" value="6"/>
</dbReference>
<dbReference type="InterPro" id="IPR001623">
    <property type="entry name" value="DnaJ_domain"/>
</dbReference>
<dbReference type="InterPro" id="IPR052460">
    <property type="entry name" value="ER_disulfide_reductase"/>
</dbReference>
<dbReference type="InterPro" id="IPR021170">
    <property type="entry name" value="ERdj5"/>
</dbReference>
<dbReference type="InterPro" id="IPR035674">
    <property type="entry name" value="ERdj5_TRX_C"/>
</dbReference>
<dbReference type="InterPro" id="IPR035673">
    <property type="entry name" value="ERdj5_TRX_N"/>
</dbReference>
<dbReference type="InterPro" id="IPR036869">
    <property type="entry name" value="J_dom_sf"/>
</dbReference>
<dbReference type="InterPro" id="IPR036249">
    <property type="entry name" value="Thioredoxin-like_sf"/>
</dbReference>
<dbReference type="InterPro" id="IPR017937">
    <property type="entry name" value="Thioredoxin_CS"/>
</dbReference>
<dbReference type="InterPro" id="IPR013766">
    <property type="entry name" value="Thioredoxin_domain"/>
</dbReference>
<dbReference type="PANTHER" id="PTHR44340">
    <property type="entry name" value="DNAJ HOMOLOG SUBFAMILY C MEMBER 10"/>
    <property type="match status" value="1"/>
</dbReference>
<dbReference type="PANTHER" id="PTHR44340:SF1">
    <property type="entry name" value="DNAJ HOMOLOG SUBFAMILY C MEMBER 10"/>
    <property type="match status" value="1"/>
</dbReference>
<dbReference type="Pfam" id="PF00226">
    <property type="entry name" value="DnaJ"/>
    <property type="match status" value="1"/>
</dbReference>
<dbReference type="Pfam" id="PF00085">
    <property type="entry name" value="Thioredoxin"/>
    <property type="match status" value="4"/>
</dbReference>
<dbReference type="PIRSF" id="PIRSF037293">
    <property type="entry name" value="DnaJ_homolog_subfam-C"/>
    <property type="match status" value="1"/>
</dbReference>
<dbReference type="PRINTS" id="PR00625">
    <property type="entry name" value="JDOMAIN"/>
</dbReference>
<dbReference type="PRINTS" id="PR00421">
    <property type="entry name" value="THIOREDOXIN"/>
</dbReference>
<dbReference type="SMART" id="SM00271">
    <property type="entry name" value="DnaJ"/>
    <property type="match status" value="1"/>
</dbReference>
<dbReference type="SUPFAM" id="SSF46565">
    <property type="entry name" value="Chaperone J-domain"/>
    <property type="match status" value="1"/>
</dbReference>
<dbReference type="SUPFAM" id="SSF52833">
    <property type="entry name" value="Thioredoxin-like"/>
    <property type="match status" value="6"/>
</dbReference>
<dbReference type="PROSITE" id="PS50076">
    <property type="entry name" value="DNAJ_2"/>
    <property type="match status" value="1"/>
</dbReference>
<dbReference type="PROSITE" id="PS00014">
    <property type="entry name" value="ER_TARGET"/>
    <property type="match status" value="1"/>
</dbReference>
<dbReference type="PROSITE" id="PS00194">
    <property type="entry name" value="THIOREDOXIN_1"/>
    <property type="match status" value="2"/>
</dbReference>
<dbReference type="PROSITE" id="PS51352">
    <property type="entry name" value="THIOREDOXIN_2"/>
    <property type="match status" value="3"/>
</dbReference>
<gene>
    <name type="primary">DNAJC10</name>
</gene>
<reference key="1">
    <citation type="submission" date="2004-11" db="EMBL/GenBank/DDBJ databases">
        <authorList>
            <consortium name="The German cDNA consortium"/>
        </authorList>
    </citation>
    <scope>NUCLEOTIDE SEQUENCE [LARGE SCALE MRNA]</scope>
    <source>
        <tissue>Kidney</tissue>
    </source>
</reference>
<evidence type="ECO:0000250" key="1"/>
<evidence type="ECO:0000255" key="2"/>
<evidence type="ECO:0000255" key="3">
    <source>
        <dbReference type="PROSITE-ProRule" id="PRU00286"/>
    </source>
</evidence>
<evidence type="ECO:0000255" key="4">
    <source>
        <dbReference type="PROSITE-ProRule" id="PRU00691"/>
    </source>
</evidence>
<evidence type="ECO:0000255" key="5">
    <source>
        <dbReference type="PROSITE-ProRule" id="PRU10138"/>
    </source>
</evidence>